<accession>Q06148</accession>
<accession>D6VYR3</accession>
<accession>Q0P6Z6</accession>
<accession>Q0P6Z7</accession>
<accession>Q0P707</accession>
<reference key="1">
    <citation type="journal article" date="2006" name="Genetics">
        <title>Sequence diversity, reproductive isolation and species concepts in Saccharomyces.</title>
        <authorList>
            <person name="Liti G."/>
            <person name="Barton D.B."/>
            <person name="Louis E.J."/>
        </authorList>
    </citation>
    <scope>NUCLEOTIDE SEQUENCE [GENOMIC DNA]</scope>
    <scope>VARIANTS ILE-17; ILE-21; GLU-65; ALA-105; GLN-161; GLY-204; PHE-231; GLU-249; VAL-270 AND CYS-281</scope>
    <source>
        <strain>DBVPG1135</strain>
        <strain>DBVPG1373</strain>
        <strain>DBVPG1378</strain>
        <strain>DBVPG1788</strain>
        <strain>DBVPG1794</strain>
        <strain>DBVPG1853</strain>
        <strain>DBVPG3051</strain>
        <strain>DBVPG6044</strain>
        <strain>DBVPG6763</strain>
        <strain>DBVPG6765</strain>
        <strain>SK1</strain>
        <strain>Y55</strain>
        <strain>YPS128</strain>
    </source>
</reference>
<reference key="2">
    <citation type="journal article" date="1997" name="Nature">
        <title>The nucleotide sequence of Saccharomyces cerevisiae chromosome XII.</title>
        <authorList>
            <person name="Johnston M."/>
            <person name="Hillier L.W."/>
            <person name="Riles L."/>
            <person name="Albermann K."/>
            <person name="Andre B."/>
            <person name="Ansorge W."/>
            <person name="Benes V."/>
            <person name="Brueckner M."/>
            <person name="Delius H."/>
            <person name="Dubois E."/>
            <person name="Duesterhoeft A."/>
            <person name="Entian K.-D."/>
            <person name="Floeth M."/>
            <person name="Goffeau A."/>
            <person name="Hebling U."/>
            <person name="Heumann K."/>
            <person name="Heuss-Neitzel D."/>
            <person name="Hilbert H."/>
            <person name="Hilger F."/>
            <person name="Kleine K."/>
            <person name="Koetter P."/>
            <person name="Louis E.J."/>
            <person name="Messenguy F."/>
            <person name="Mewes H.-W."/>
            <person name="Miosga T."/>
            <person name="Moestl D."/>
            <person name="Mueller-Auer S."/>
            <person name="Nentwich U."/>
            <person name="Obermaier B."/>
            <person name="Piravandi E."/>
            <person name="Pohl T.M."/>
            <person name="Portetelle D."/>
            <person name="Purnelle B."/>
            <person name="Rechmann S."/>
            <person name="Rieger M."/>
            <person name="Rinke M."/>
            <person name="Rose M."/>
            <person name="Scharfe M."/>
            <person name="Scherens B."/>
            <person name="Scholler P."/>
            <person name="Schwager C."/>
            <person name="Schwarz S."/>
            <person name="Underwood A.P."/>
            <person name="Urrestarazu L.A."/>
            <person name="Vandenbol M."/>
            <person name="Verhasselt P."/>
            <person name="Vierendeels F."/>
            <person name="Voet M."/>
            <person name="Volckaert G."/>
            <person name="Voss H."/>
            <person name="Wambutt R."/>
            <person name="Wedler E."/>
            <person name="Wedler H."/>
            <person name="Zimmermann F.K."/>
            <person name="Zollner A."/>
            <person name="Hani J."/>
            <person name="Hoheisel J.D."/>
        </authorList>
    </citation>
    <scope>NUCLEOTIDE SEQUENCE [LARGE SCALE GENOMIC DNA]</scope>
    <source>
        <strain>ATCC 204508 / S288c</strain>
    </source>
</reference>
<reference key="3">
    <citation type="journal article" date="2014" name="G3 (Bethesda)">
        <title>The reference genome sequence of Saccharomyces cerevisiae: Then and now.</title>
        <authorList>
            <person name="Engel S.R."/>
            <person name="Dietrich F.S."/>
            <person name="Fisk D.G."/>
            <person name="Binkley G."/>
            <person name="Balakrishnan R."/>
            <person name="Costanzo M.C."/>
            <person name="Dwight S.S."/>
            <person name="Hitz B.C."/>
            <person name="Karra K."/>
            <person name="Nash R.S."/>
            <person name="Weng S."/>
            <person name="Wong E.D."/>
            <person name="Lloyd P."/>
            <person name="Skrzypek M.S."/>
            <person name="Miyasato S.R."/>
            <person name="Simison M."/>
            <person name="Cherry J.M."/>
        </authorList>
    </citation>
    <scope>GENOME REANNOTATION</scope>
    <source>
        <strain>ATCC 204508 / S288c</strain>
    </source>
</reference>
<reference key="4">
    <citation type="journal article" date="2007" name="Genome Res.">
        <title>Approaching a complete repository of sequence-verified protein-encoding clones for Saccharomyces cerevisiae.</title>
        <authorList>
            <person name="Hu Y."/>
            <person name="Rolfs A."/>
            <person name="Bhullar B."/>
            <person name="Murthy T.V.S."/>
            <person name="Zhu C."/>
            <person name="Berger M.F."/>
            <person name="Camargo A.A."/>
            <person name="Kelley F."/>
            <person name="McCarron S."/>
            <person name="Jepson D."/>
            <person name="Richardson A."/>
            <person name="Raphael J."/>
            <person name="Moreira D."/>
            <person name="Taycher E."/>
            <person name="Zuo D."/>
            <person name="Mohr S."/>
            <person name="Kane M.F."/>
            <person name="Williamson J."/>
            <person name="Simpson A.J.G."/>
            <person name="Bulyk M.L."/>
            <person name="Harlow E."/>
            <person name="Marsischky G."/>
            <person name="Kolodner R.D."/>
            <person name="LaBaer J."/>
        </authorList>
    </citation>
    <scope>NUCLEOTIDE SEQUENCE [GENOMIC DNA]</scope>
    <source>
        <strain>ATCC 204508 / S288c</strain>
    </source>
</reference>
<reference key="5">
    <citation type="journal article" date="2001" name="Curr. Biol.">
        <title>Nej1p, a cell type-specific regulator of nonhomologous end joining in yeast.</title>
        <authorList>
            <person name="Kegel A."/>
            <person name="Sjoestrand J.O.O."/>
            <person name="Aastroem S.U."/>
        </authorList>
    </citation>
    <scope>FUNCTION</scope>
    <scope>INDUCTION</scope>
</reference>
<reference key="6">
    <citation type="journal article" date="2001" name="Genes Dev.">
        <title>NHEJ regulation by mating type is exercised through a novel protein, Lif2p, essential to the ligase IV pathway.</title>
        <authorList>
            <person name="Frank-Vaillant M."/>
            <person name="Marcand S."/>
        </authorList>
    </citation>
    <scope>FUNCTION</scope>
    <scope>INTERACTION WITH LIF1</scope>
    <scope>INDUCTION</scope>
</reference>
<reference key="7">
    <citation type="journal article" date="2001" name="Nature">
        <title>NEJ1 controls non-homologous end joining in Saccharomyces cerevisiae.</title>
        <authorList>
            <person name="Valencia M."/>
            <person name="Bentele M."/>
            <person name="Vaze M.B."/>
            <person name="Herrmann G."/>
            <person name="Kraus E."/>
            <person name="Lee S.E."/>
            <person name="Schaer P."/>
            <person name="Haber J.E."/>
        </authorList>
    </citation>
    <scope>FUNCTION</scope>
    <scope>INDUCTION</scope>
</reference>
<reference key="8">
    <citation type="journal article" date="2001" name="Science">
        <title>A DNA microarray-based genetic screen for nonhomologous end-joining mutants in Saccharomyces cerevisiae.</title>
        <authorList>
            <person name="Ooi S.L."/>
            <person name="Shoemaker D.D."/>
            <person name="Boeke J.D."/>
        </authorList>
    </citation>
    <scope>FUNCTION</scope>
</reference>
<reference key="9">
    <citation type="journal article" date="2002" name="Genetics">
        <title>A genomics-based screen for yeast mutants with an altered recombination/end-joining repair ratio.</title>
        <authorList>
            <person name="Wilson T.E."/>
        </authorList>
    </citation>
    <scope>FUNCTION</scope>
</reference>
<reference key="10">
    <citation type="journal article" date="2003" name="Mol. Cell">
        <title>NEJ1 prevents NHEJ-dependent telomere fusions in yeast without telomerase.</title>
        <authorList>
            <person name="Liti G."/>
            <person name="Louis E.J."/>
        </authorList>
    </citation>
    <scope>FUNCTION</scope>
</reference>
<reference key="11">
    <citation type="journal article" date="2003" name="Nature">
        <title>Global analysis of protein localization in budding yeast.</title>
        <authorList>
            <person name="Huh W.-K."/>
            <person name="Falvo J.V."/>
            <person name="Gerke L.C."/>
            <person name="Carroll A.S."/>
            <person name="Howson R.W."/>
            <person name="Weissman J.S."/>
            <person name="O'Shea E.K."/>
        </authorList>
    </citation>
    <scope>SUBCELLULAR LOCATION [LARGE SCALE ANALYSIS]</scope>
</reference>
<reference key="12">
    <citation type="journal article" date="2003" name="Nature">
        <title>Global analysis of protein expression in yeast.</title>
        <authorList>
            <person name="Ghaemmaghami S."/>
            <person name="Huh W.-K."/>
            <person name="Bower K."/>
            <person name="Howson R.W."/>
            <person name="Belle A."/>
            <person name="Dephoure N."/>
            <person name="O'Shea E.K."/>
            <person name="Weissman J.S."/>
        </authorList>
    </citation>
    <scope>LEVEL OF PROTEIN EXPRESSION [LARGE SCALE ANALYSIS]</scope>
</reference>
<reference key="13">
    <citation type="journal article" date="2005" name="Mol. Cell. Biol.">
        <title>Mutations of the Yku80 C terminus and Xrs2 FHA domain specifically block yeast nonhomologous end joining.</title>
        <authorList>
            <person name="Palmbos P.L."/>
            <person name="Daley J.M."/>
            <person name="Wilson T.E."/>
        </authorList>
    </citation>
    <scope>INTERACTION WITH LIF1</scope>
</reference>
<reference key="14">
    <citation type="journal article" date="2007" name="DNA Repair">
        <title>Modes of interaction among yeast Nej1, Lif1 and Dnl4 proteins and comparison to human XLF, XRCC4 and Lig4.</title>
        <authorList>
            <person name="Deshpande R.A."/>
            <person name="Wilson T.E."/>
        </authorList>
    </citation>
    <scope>INTERACTION WITH LIF1 AND DNL4</scope>
</reference>
<sequence>MDSELKGQQLSDAEWCVKKINGEGNCLLLFLPMSSPTTIVMIVLVSLERLVPYVFKLSQTQLSQQCQSQGFTDSISLNLIKLKLMDILQAPQEINQIGLVDSNLVFSFDVSADITVSINSVPSHVTKDMFYMILQSLCMLLLKLVNLSTQYHYVQRDILNEKQKCLDFLLISLRDLDGGSKVISQWAPENSKNYESLQQCTDDDIIKKLLHKGKFQHQEFLADSLKTLLSLRNKFQDVSRFEESGELNKKERVRFPAVNHFYNDDFELQADPTNEARPNSRGKIKPKTDFKPKSRESSTSSQLRLENFSESEATPEKTKSSSSLVEEYPQKKRKFGKVRIKN</sequence>
<dbReference type="EMBL" id="AM296374">
    <property type="protein sequence ID" value="CAL35943.1"/>
    <property type="molecule type" value="Genomic_DNA"/>
</dbReference>
<dbReference type="EMBL" id="AM296375">
    <property type="protein sequence ID" value="CAL35942.1"/>
    <property type="molecule type" value="Genomic_DNA"/>
</dbReference>
<dbReference type="EMBL" id="AM296376">
    <property type="protein sequence ID" value="CAL35941.1"/>
    <property type="molecule type" value="Genomic_DNA"/>
</dbReference>
<dbReference type="EMBL" id="AM296377">
    <property type="protein sequence ID" value="CAL35940.1"/>
    <property type="molecule type" value="Genomic_DNA"/>
</dbReference>
<dbReference type="EMBL" id="AM296378">
    <property type="protein sequence ID" value="CAL35939.1"/>
    <property type="molecule type" value="Genomic_DNA"/>
</dbReference>
<dbReference type="EMBL" id="AM296379">
    <property type="protein sequence ID" value="CAL35938.1"/>
    <property type="molecule type" value="Genomic_DNA"/>
</dbReference>
<dbReference type="EMBL" id="AM296380">
    <property type="protein sequence ID" value="CAL35937.1"/>
    <property type="molecule type" value="Genomic_DNA"/>
</dbReference>
<dbReference type="EMBL" id="AM296381">
    <property type="protein sequence ID" value="CAL35936.1"/>
    <property type="molecule type" value="Genomic_DNA"/>
</dbReference>
<dbReference type="EMBL" id="AM296382">
    <property type="protein sequence ID" value="CAL36078.1"/>
    <property type="molecule type" value="Genomic_DNA"/>
</dbReference>
<dbReference type="EMBL" id="AM296383">
    <property type="protein sequence ID" value="CAL35935.1"/>
    <property type="molecule type" value="Genomic_DNA"/>
</dbReference>
<dbReference type="EMBL" id="AM296384">
    <property type="protein sequence ID" value="CAL35934.1"/>
    <property type="molecule type" value="Genomic_DNA"/>
</dbReference>
<dbReference type="EMBL" id="AM296385">
    <property type="protein sequence ID" value="CAL35933.1"/>
    <property type="molecule type" value="Genomic_DNA"/>
</dbReference>
<dbReference type="EMBL" id="AM296386">
    <property type="protein sequence ID" value="CAL35932.1"/>
    <property type="molecule type" value="Genomic_DNA"/>
</dbReference>
<dbReference type="EMBL" id="U17244">
    <property type="protein sequence ID" value="AAB67382.1"/>
    <property type="molecule type" value="Genomic_DNA"/>
</dbReference>
<dbReference type="EMBL" id="AY557954">
    <property type="protein sequence ID" value="AAS56280.1"/>
    <property type="molecule type" value="Genomic_DNA"/>
</dbReference>
<dbReference type="EMBL" id="BK006945">
    <property type="protein sequence ID" value="DAA09579.1"/>
    <property type="molecule type" value="Genomic_DNA"/>
</dbReference>
<dbReference type="PIR" id="S51402">
    <property type="entry name" value="S51402"/>
</dbReference>
<dbReference type="RefSeq" id="NP_013367.1">
    <property type="nucleotide sequence ID" value="NM_001182152.1"/>
</dbReference>
<dbReference type="BioGRID" id="31533">
    <property type="interactions" value="135"/>
</dbReference>
<dbReference type="DIP" id="DIP-4776N"/>
<dbReference type="FunCoup" id="Q06148">
    <property type="interactions" value="56"/>
</dbReference>
<dbReference type="IntAct" id="Q06148">
    <property type="interactions" value="3"/>
</dbReference>
<dbReference type="MINT" id="Q06148"/>
<dbReference type="STRING" id="4932.YLR265C"/>
<dbReference type="CarbonylDB" id="Q06148"/>
<dbReference type="iPTMnet" id="Q06148"/>
<dbReference type="PaxDb" id="4932-YLR265C"/>
<dbReference type="PeptideAtlas" id="Q06148"/>
<dbReference type="EnsemblFungi" id="YLR265C_mRNA">
    <property type="protein sequence ID" value="YLR265C"/>
    <property type="gene ID" value="YLR265C"/>
</dbReference>
<dbReference type="GeneID" id="850970"/>
<dbReference type="KEGG" id="sce:YLR265C"/>
<dbReference type="AGR" id="SGD:S000004255"/>
<dbReference type="SGD" id="S000004255">
    <property type="gene designation" value="NEJ1"/>
</dbReference>
<dbReference type="VEuPathDB" id="FungiDB:YLR265C"/>
<dbReference type="HOGENOM" id="CLU_799750_0_0_1"/>
<dbReference type="InParanoid" id="Q06148"/>
<dbReference type="OMA" id="KFQHQEF"/>
<dbReference type="OrthoDB" id="4049856at2759"/>
<dbReference type="BioCyc" id="YEAST:G3O-32365-MONOMER"/>
<dbReference type="BioGRID-ORCS" id="850970">
    <property type="hits" value="1 hit in 10 CRISPR screens"/>
</dbReference>
<dbReference type="PRO" id="PR:Q06148"/>
<dbReference type="Proteomes" id="UP000002311">
    <property type="component" value="Chromosome XII"/>
</dbReference>
<dbReference type="RNAct" id="Q06148">
    <property type="molecule type" value="protein"/>
</dbReference>
<dbReference type="GO" id="GO:0005737">
    <property type="term" value="C:cytoplasm"/>
    <property type="evidence" value="ECO:0007669"/>
    <property type="project" value="UniProtKB-SubCell"/>
</dbReference>
<dbReference type="GO" id="GO:0032807">
    <property type="term" value="C:DNA ligase IV complex"/>
    <property type="evidence" value="ECO:0000353"/>
    <property type="project" value="SGD"/>
</dbReference>
<dbReference type="GO" id="GO:0031965">
    <property type="term" value="C:nuclear membrane"/>
    <property type="evidence" value="ECO:0007669"/>
    <property type="project" value="UniProtKB-SubCell"/>
</dbReference>
<dbReference type="GO" id="GO:0005634">
    <property type="term" value="C:nucleus"/>
    <property type="evidence" value="ECO:0000314"/>
    <property type="project" value="SGD"/>
</dbReference>
<dbReference type="GO" id="GO:0035861">
    <property type="term" value="C:site of double-strand break"/>
    <property type="evidence" value="ECO:0000314"/>
    <property type="project" value="SGD"/>
</dbReference>
<dbReference type="GO" id="GO:0045027">
    <property type="term" value="F:DNA end binding"/>
    <property type="evidence" value="ECO:0000314"/>
    <property type="project" value="SGD"/>
</dbReference>
<dbReference type="GO" id="GO:0006303">
    <property type="term" value="P:double-strand break repair via nonhomologous end joining"/>
    <property type="evidence" value="ECO:0000314"/>
    <property type="project" value="SGD"/>
</dbReference>
<dbReference type="GO" id="GO:0045002">
    <property type="term" value="P:double-strand break repair via single-strand annealing"/>
    <property type="evidence" value="ECO:0000315"/>
    <property type="project" value="SGD"/>
</dbReference>
<dbReference type="GO" id="GO:0035825">
    <property type="term" value="P:homologous recombination"/>
    <property type="evidence" value="ECO:0000315"/>
    <property type="project" value="SGD"/>
</dbReference>
<dbReference type="InterPro" id="IPR052287">
    <property type="entry name" value="NHEJ_factor"/>
</dbReference>
<dbReference type="PANTHER" id="PTHR32235">
    <property type="entry name" value="NON-HOMOLOGOUS END-JOINING FACTOR 1"/>
    <property type="match status" value="1"/>
</dbReference>
<dbReference type="PANTHER" id="PTHR32235:SF1">
    <property type="entry name" value="NON-HOMOLOGOUS END-JOINING FACTOR 1"/>
    <property type="match status" value="1"/>
</dbReference>
<keyword id="KW-0963">Cytoplasm</keyword>
<keyword id="KW-0227">DNA damage</keyword>
<keyword id="KW-0234">DNA repair</keyword>
<keyword id="KW-0472">Membrane</keyword>
<keyword id="KW-0539">Nucleus</keyword>
<keyword id="KW-1185">Reference proteome</keyword>
<keyword id="KW-0812">Transmembrane</keyword>
<keyword id="KW-1133">Transmembrane helix</keyword>
<comment type="function">
    <text evidence="3 4 5 6 7 8">Involved in non-homologous end joining (NHEJ). Facilitates the transport of LIF1 into the nucleus, where it can interact with DNA ligase DNL4 to repair double-strand breaks (DSB). Mediates mating-type regulation of NHEJ. Prevents chromosome circularisation by NHEJ in absence of telomerase.</text>
</comment>
<comment type="subunit">
    <text evidence="5 11 13">Interacts (via C-terminus) with LIF1 (via N-terminus); the interaction is direct (PubMed:11711435, PubMed:16314503, PubMed:17567543). Interacts with DNL4 (PubMed:17567543).</text>
</comment>
<comment type="interaction">
    <interactant intactId="EBI-34047">
        <id>Q06148</id>
    </interactant>
    <interactant intactId="EBI-23865">
        <id>P53150</id>
        <label>LIF1</label>
    </interactant>
    <organismsDiffer>false</organismsDiffer>
    <experiments>4</experiments>
</comment>
<comment type="interaction">
    <interactant intactId="EBI-34047">
        <id>Q06148</id>
    </interactant>
    <interactant intactId="EBI-18110">
        <id>P12954</id>
        <label>SRS2</label>
    </interactant>
    <organismsDiffer>false</organismsDiffer>
    <experiments>3</experiments>
</comment>
<comment type="subcellular location">
    <subcellularLocation>
        <location evidence="9">Cytoplasm</location>
    </subcellularLocation>
    <subcellularLocation>
        <location evidence="9">Nucleus membrane</location>
        <topology evidence="9">Multi-pass membrane protein</topology>
    </subcellularLocation>
</comment>
<comment type="induction">
    <text evidence="3 5 6">Repressed in diploid cells.</text>
</comment>
<comment type="miscellaneous">
    <text evidence="10">Present with 377 molecules/cell in log phase SD medium.</text>
</comment>
<comment type="similarity">
    <text evidence="14">Belongs to the XRCC4-XLF family. XLF subfamily.</text>
</comment>
<gene>
    <name type="primary">NEJ1</name>
    <name type="synonym">LIF2</name>
    <name type="ordered locus">YLR265C</name>
</gene>
<organism>
    <name type="scientific">Saccharomyces cerevisiae (strain ATCC 204508 / S288c)</name>
    <name type="common">Baker's yeast</name>
    <dbReference type="NCBI Taxonomy" id="559292"/>
    <lineage>
        <taxon>Eukaryota</taxon>
        <taxon>Fungi</taxon>
        <taxon>Dikarya</taxon>
        <taxon>Ascomycota</taxon>
        <taxon>Saccharomycotina</taxon>
        <taxon>Saccharomycetes</taxon>
        <taxon>Saccharomycetales</taxon>
        <taxon>Saccharomycetaceae</taxon>
        <taxon>Saccharomyces</taxon>
    </lineage>
</organism>
<evidence type="ECO:0000255" key="1"/>
<evidence type="ECO:0000256" key="2">
    <source>
        <dbReference type="SAM" id="MobiDB-lite"/>
    </source>
</evidence>
<evidence type="ECO:0000269" key="3">
    <source>
    </source>
</evidence>
<evidence type="ECO:0000269" key="4">
    <source>
    </source>
</evidence>
<evidence type="ECO:0000269" key="5">
    <source>
    </source>
</evidence>
<evidence type="ECO:0000269" key="6">
    <source>
    </source>
</evidence>
<evidence type="ECO:0000269" key="7">
    <source>
    </source>
</evidence>
<evidence type="ECO:0000269" key="8">
    <source>
    </source>
</evidence>
<evidence type="ECO:0000269" key="9">
    <source>
    </source>
</evidence>
<evidence type="ECO:0000269" key="10">
    <source>
    </source>
</evidence>
<evidence type="ECO:0000269" key="11">
    <source>
    </source>
</evidence>
<evidence type="ECO:0000269" key="12">
    <source>
    </source>
</evidence>
<evidence type="ECO:0000269" key="13">
    <source>
    </source>
</evidence>
<evidence type="ECO:0000305" key="14"/>
<feature type="chain" id="PRO_0000268689" description="Non-homologous end-joining protein 1">
    <location>
        <begin position="1"/>
        <end position="342"/>
    </location>
</feature>
<feature type="transmembrane region" description="Helical" evidence="1">
    <location>
        <begin position="27"/>
        <end position="47"/>
    </location>
</feature>
<feature type="transmembrane region" description="Helical" evidence="1">
    <location>
        <begin position="129"/>
        <end position="149"/>
    </location>
</feature>
<feature type="region of interest" description="Interaction with LIF1" evidence="11">
    <location>
        <begin position="173"/>
        <end position="342"/>
    </location>
</feature>
<feature type="region of interest" description="Disordered" evidence="2">
    <location>
        <begin position="270"/>
        <end position="342"/>
    </location>
</feature>
<feature type="compositionally biased region" description="Basic and acidic residues" evidence="2">
    <location>
        <begin position="286"/>
        <end position="296"/>
    </location>
</feature>
<feature type="compositionally biased region" description="Polar residues" evidence="2">
    <location>
        <begin position="297"/>
        <end position="312"/>
    </location>
</feature>
<feature type="compositionally biased region" description="Basic residues" evidence="2">
    <location>
        <begin position="331"/>
        <end position="342"/>
    </location>
</feature>
<feature type="sequence variant" description="In strain: DBVPG1135, DBVPG1373, DBVPG1378, DBVPG1788, DBVPG1794, DBVPG1853, DBVPG3051, DBVPG6044, DBVPG6763, DBVPG6765, SK1, Y55 and YPS128." evidence="12">
    <original>V</original>
    <variation>I</variation>
    <location>
        <position position="17"/>
    </location>
</feature>
<feature type="sequence variant" description="In strain: DBVPG1135, DBVPG1373, DBVPG1378, DBVPG1788, DBVPG1794, DBVPG1853, DBVPG3051, DBVPG6763, DBVPG6765 and SK1." evidence="12">
    <original>N</original>
    <variation>I</variation>
    <location>
        <position position="21"/>
    </location>
</feature>
<feature type="sequence variant" description="In strain: YPS128." evidence="12">
    <original>Q</original>
    <variation>E</variation>
    <location>
        <position position="65"/>
    </location>
</feature>
<feature type="sequence variant" description="In strain: YPS128." evidence="12">
    <original>V</original>
    <variation>A</variation>
    <location>
        <position position="105"/>
    </location>
</feature>
<feature type="sequence variant" description="In strain: DBVPG1135, DBVPG1373, DBVPG1378, DBVPG1788, DBVPG1794, DBVPG1853, DBVPG3051, DBVPG6763, DBVPG6765 and SK1." evidence="12">
    <original>E</original>
    <variation>Q</variation>
    <location>
        <position position="161"/>
    </location>
</feature>
<feature type="sequence variant" description="In strain: DBVPG6044 and Y55." evidence="12">
    <original>D</original>
    <variation>G</variation>
    <location>
        <position position="204"/>
    </location>
</feature>
<feature type="sequence variant" description="In strain: DBVPG1135, DBVPG1373, DBVPG1378, DBVPG1788, DBVPG1794, DBVPG1853, DBVPG3051, DBVPG6763, DBVPG6765 and SK1." evidence="12">
    <original>L</original>
    <variation>F</variation>
    <location>
        <position position="231"/>
    </location>
</feature>
<feature type="sequence variant" description="In strain: DBVPG1135, DBVPG1373, DBVPG1378, DBVPG1788, DBVPG1794, DBVPG1853, DBVPG3051, DBVPG6763, DBVPG6765 and SK1." evidence="12">
    <original>K</original>
    <variation>E</variation>
    <location>
        <position position="249"/>
    </location>
</feature>
<feature type="sequence variant" description="In strain: DBVPG1135, DBVPG1373, DBVPG1378, DBVPG1788, DBVPG1794, DBVPG1853, DBVPG3051, DBVPG6763, DBVPG6765 and SK1." evidence="12">
    <original>A</original>
    <variation>V</variation>
    <location>
        <position position="270"/>
    </location>
</feature>
<feature type="sequence variant" description="In strain: DBVPG1135, DBVPG1373, DBVPG1378, DBVPG1788, DBVPG1794, DBVPG1853, DBVPG3051, DBVPG6763, DBVPG6765 and SK1." evidence="12">
    <original>R</original>
    <variation>C</variation>
    <location>
        <position position="281"/>
    </location>
</feature>
<protein>
    <recommendedName>
        <fullName>Non-homologous end-joining protein 1</fullName>
    </recommendedName>
</protein>
<proteinExistence type="evidence at protein level"/>
<name>NHEJ1_YEAST</name>